<gene>
    <name evidence="1" type="primary">thrS</name>
    <name type="ordered locus">YPTS_2416</name>
</gene>
<comment type="function">
    <text evidence="1">Catalyzes the attachment of threonine to tRNA(Thr) in a two-step reaction: L-threonine is first activated by ATP to form Thr-AMP and then transferred to the acceptor end of tRNA(Thr). Also edits incorrectly charged L-seryl-tRNA(Thr).</text>
</comment>
<comment type="catalytic activity">
    <reaction evidence="1">
        <text>tRNA(Thr) + L-threonine + ATP = L-threonyl-tRNA(Thr) + AMP + diphosphate + H(+)</text>
        <dbReference type="Rhea" id="RHEA:24624"/>
        <dbReference type="Rhea" id="RHEA-COMP:9670"/>
        <dbReference type="Rhea" id="RHEA-COMP:9704"/>
        <dbReference type="ChEBI" id="CHEBI:15378"/>
        <dbReference type="ChEBI" id="CHEBI:30616"/>
        <dbReference type="ChEBI" id="CHEBI:33019"/>
        <dbReference type="ChEBI" id="CHEBI:57926"/>
        <dbReference type="ChEBI" id="CHEBI:78442"/>
        <dbReference type="ChEBI" id="CHEBI:78534"/>
        <dbReference type="ChEBI" id="CHEBI:456215"/>
        <dbReference type="EC" id="6.1.1.3"/>
    </reaction>
</comment>
<comment type="cofactor">
    <cofactor evidence="1">
        <name>Zn(2+)</name>
        <dbReference type="ChEBI" id="CHEBI:29105"/>
    </cofactor>
    <text evidence="1">Binds 1 zinc ion per subunit.</text>
</comment>
<comment type="subunit">
    <text evidence="1">Homodimer.</text>
</comment>
<comment type="subcellular location">
    <subcellularLocation>
        <location evidence="1">Cytoplasm</location>
    </subcellularLocation>
</comment>
<comment type="similarity">
    <text evidence="1">Belongs to the class-II aminoacyl-tRNA synthetase family.</text>
</comment>
<dbReference type="EC" id="6.1.1.3" evidence="1"/>
<dbReference type="EMBL" id="CP001048">
    <property type="protein sequence ID" value="ACC89377.1"/>
    <property type="molecule type" value="Genomic_DNA"/>
</dbReference>
<dbReference type="RefSeq" id="WP_002211836.1">
    <property type="nucleotide sequence ID" value="NZ_CP009780.1"/>
</dbReference>
<dbReference type="SMR" id="B2K668"/>
<dbReference type="GeneID" id="57976245"/>
<dbReference type="KEGG" id="ypb:YPTS_2416"/>
<dbReference type="PATRIC" id="fig|502801.10.peg.1823"/>
<dbReference type="GO" id="GO:0005829">
    <property type="term" value="C:cytosol"/>
    <property type="evidence" value="ECO:0007669"/>
    <property type="project" value="TreeGrafter"/>
</dbReference>
<dbReference type="GO" id="GO:0005524">
    <property type="term" value="F:ATP binding"/>
    <property type="evidence" value="ECO:0007669"/>
    <property type="project" value="UniProtKB-UniRule"/>
</dbReference>
<dbReference type="GO" id="GO:0046872">
    <property type="term" value="F:metal ion binding"/>
    <property type="evidence" value="ECO:0007669"/>
    <property type="project" value="UniProtKB-KW"/>
</dbReference>
<dbReference type="GO" id="GO:0004829">
    <property type="term" value="F:threonine-tRNA ligase activity"/>
    <property type="evidence" value="ECO:0007669"/>
    <property type="project" value="UniProtKB-UniRule"/>
</dbReference>
<dbReference type="GO" id="GO:0000049">
    <property type="term" value="F:tRNA binding"/>
    <property type="evidence" value="ECO:0007669"/>
    <property type="project" value="UniProtKB-KW"/>
</dbReference>
<dbReference type="GO" id="GO:0006435">
    <property type="term" value="P:threonyl-tRNA aminoacylation"/>
    <property type="evidence" value="ECO:0007669"/>
    <property type="project" value="UniProtKB-UniRule"/>
</dbReference>
<dbReference type="CDD" id="cd01667">
    <property type="entry name" value="TGS_ThrRS"/>
    <property type="match status" value="1"/>
</dbReference>
<dbReference type="CDD" id="cd00860">
    <property type="entry name" value="ThrRS_anticodon"/>
    <property type="match status" value="1"/>
</dbReference>
<dbReference type="CDD" id="cd00771">
    <property type="entry name" value="ThrRS_core"/>
    <property type="match status" value="1"/>
</dbReference>
<dbReference type="FunFam" id="3.10.20.30:FF:000005">
    <property type="entry name" value="Threonine--tRNA ligase"/>
    <property type="match status" value="1"/>
</dbReference>
<dbReference type="FunFam" id="3.30.54.20:FF:000002">
    <property type="entry name" value="Threonine--tRNA ligase"/>
    <property type="match status" value="1"/>
</dbReference>
<dbReference type="FunFam" id="3.30.930.10:FF:000002">
    <property type="entry name" value="Threonine--tRNA ligase"/>
    <property type="match status" value="1"/>
</dbReference>
<dbReference type="FunFam" id="3.40.50.800:FF:000001">
    <property type="entry name" value="Threonine--tRNA ligase"/>
    <property type="match status" value="1"/>
</dbReference>
<dbReference type="FunFam" id="3.30.980.10:FF:000005">
    <property type="entry name" value="Threonyl-tRNA synthetase, mitochondrial"/>
    <property type="match status" value="1"/>
</dbReference>
<dbReference type="Gene3D" id="3.10.20.30">
    <property type="match status" value="1"/>
</dbReference>
<dbReference type="Gene3D" id="3.30.54.20">
    <property type="match status" value="1"/>
</dbReference>
<dbReference type="Gene3D" id="3.40.50.800">
    <property type="entry name" value="Anticodon-binding domain"/>
    <property type="match status" value="1"/>
</dbReference>
<dbReference type="Gene3D" id="3.30.930.10">
    <property type="entry name" value="Bira Bifunctional Protein, Domain 2"/>
    <property type="match status" value="1"/>
</dbReference>
<dbReference type="Gene3D" id="3.30.980.10">
    <property type="entry name" value="Threonyl-trna Synthetase, Chain A, domain 2"/>
    <property type="match status" value="1"/>
</dbReference>
<dbReference type="HAMAP" id="MF_00184">
    <property type="entry name" value="Thr_tRNA_synth"/>
    <property type="match status" value="1"/>
</dbReference>
<dbReference type="InterPro" id="IPR002314">
    <property type="entry name" value="aa-tRNA-synt_IIb"/>
</dbReference>
<dbReference type="InterPro" id="IPR006195">
    <property type="entry name" value="aa-tRNA-synth_II"/>
</dbReference>
<dbReference type="InterPro" id="IPR045864">
    <property type="entry name" value="aa-tRNA-synth_II/BPL/LPL"/>
</dbReference>
<dbReference type="InterPro" id="IPR004154">
    <property type="entry name" value="Anticodon-bd"/>
</dbReference>
<dbReference type="InterPro" id="IPR036621">
    <property type="entry name" value="Anticodon-bd_dom_sf"/>
</dbReference>
<dbReference type="InterPro" id="IPR012675">
    <property type="entry name" value="Beta-grasp_dom_sf"/>
</dbReference>
<dbReference type="InterPro" id="IPR004095">
    <property type="entry name" value="TGS"/>
</dbReference>
<dbReference type="InterPro" id="IPR012676">
    <property type="entry name" value="TGS-like"/>
</dbReference>
<dbReference type="InterPro" id="IPR002320">
    <property type="entry name" value="Thr-tRNA-ligase_IIa"/>
</dbReference>
<dbReference type="InterPro" id="IPR018163">
    <property type="entry name" value="Thr/Ala-tRNA-synth_IIc_edit"/>
</dbReference>
<dbReference type="InterPro" id="IPR047246">
    <property type="entry name" value="ThrRS_anticodon"/>
</dbReference>
<dbReference type="InterPro" id="IPR033728">
    <property type="entry name" value="ThrRS_core"/>
</dbReference>
<dbReference type="InterPro" id="IPR012947">
    <property type="entry name" value="tRNA_SAD"/>
</dbReference>
<dbReference type="NCBIfam" id="TIGR00418">
    <property type="entry name" value="thrS"/>
    <property type="match status" value="1"/>
</dbReference>
<dbReference type="PANTHER" id="PTHR11451:SF44">
    <property type="entry name" value="THREONINE--TRNA LIGASE, CHLOROPLASTIC_MITOCHONDRIAL 2"/>
    <property type="match status" value="1"/>
</dbReference>
<dbReference type="PANTHER" id="PTHR11451">
    <property type="entry name" value="THREONINE-TRNA LIGASE"/>
    <property type="match status" value="1"/>
</dbReference>
<dbReference type="Pfam" id="PF03129">
    <property type="entry name" value="HGTP_anticodon"/>
    <property type="match status" value="1"/>
</dbReference>
<dbReference type="Pfam" id="PF02824">
    <property type="entry name" value="TGS"/>
    <property type="match status" value="1"/>
</dbReference>
<dbReference type="Pfam" id="PF00587">
    <property type="entry name" value="tRNA-synt_2b"/>
    <property type="match status" value="1"/>
</dbReference>
<dbReference type="Pfam" id="PF07973">
    <property type="entry name" value="tRNA_SAD"/>
    <property type="match status" value="1"/>
</dbReference>
<dbReference type="PRINTS" id="PR01047">
    <property type="entry name" value="TRNASYNTHTHR"/>
</dbReference>
<dbReference type="SMART" id="SM00863">
    <property type="entry name" value="tRNA_SAD"/>
    <property type="match status" value="1"/>
</dbReference>
<dbReference type="SUPFAM" id="SSF52954">
    <property type="entry name" value="Class II aaRS ABD-related"/>
    <property type="match status" value="1"/>
</dbReference>
<dbReference type="SUPFAM" id="SSF55681">
    <property type="entry name" value="Class II aaRS and biotin synthetases"/>
    <property type="match status" value="1"/>
</dbReference>
<dbReference type="SUPFAM" id="SSF81271">
    <property type="entry name" value="TGS-like"/>
    <property type="match status" value="1"/>
</dbReference>
<dbReference type="SUPFAM" id="SSF55186">
    <property type="entry name" value="ThrRS/AlaRS common domain"/>
    <property type="match status" value="1"/>
</dbReference>
<dbReference type="PROSITE" id="PS50862">
    <property type="entry name" value="AA_TRNA_LIGASE_II"/>
    <property type="match status" value="1"/>
</dbReference>
<dbReference type="PROSITE" id="PS51880">
    <property type="entry name" value="TGS"/>
    <property type="match status" value="1"/>
</dbReference>
<evidence type="ECO:0000255" key="1">
    <source>
        <dbReference type="HAMAP-Rule" id="MF_00184"/>
    </source>
</evidence>
<evidence type="ECO:0000255" key="2">
    <source>
        <dbReference type="PROSITE-ProRule" id="PRU01228"/>
    </source>
</evidence>
<organism>
    <name type="scientific">Yersinia pseudotuberculosis serotype IB (strain PB1/+)</name>
    <dbReference type="NCBI Taxonomy" id="502801"/>
    <lineage>
        <taxon>Bacteria</taxon>
        <taxon>Pseudomonadati</taxon>
        <taxon>Pseudomonadota</taxon>
        <taxon>Gammaproteobacteria</taxon>
        <taxon>Enterobacterales</taxon>
        <taxon>Yersiniaceae</taxon>
        <taxon>Yersinia</taxon>
    </lineage>
</organism>
<accession>B2K668</accession>
<feature type="chain" id="PRO_1000098631" description="Threonine--tRNA ligase">
    <location>
        <begin position="1"/>
        <end position="642"/>
    </location>
</feature>
<feature type="domain" description="TGS" evidence="2">
    <location>
        <begin position="1"/>
        <end position="61"/>
    </location>
</feature>
<feature type="region of interest" description="Catalytic" evidence="1">
    <location>
        <begin position="243"/>
        <end position="534"/>
    </location>
</feature>
<feature type="binding site" evidence="1">
    <location>
        <position position="334"/>
    </location>
    <ligand>
        <name>Zn(2+)</name>
        <dbReference type="ChEBI" id="CHEBI:29105"/>
    </ligand>
</feature>
<feature type="binding site" evidence="1">
    <location>
        <position position="385"/>
    </location>
    <ligand>
        <name>Zn(2+)</name>
        <dbReference type="ChEBI" id="CHEBI:29105"/>
    </ligand>
</feature>
<feature type="binding site" evidence="1">
    <location>
        <position position="511"/>
    </location>
    <ligand>
        <name>Zn(2+)</name>
        <dbReference type="ChEBI" id="CHEBI:29105"/>
    </ligand>
</feature>
<name>SYT_YERPB</name>
<protein>
    <recommendedName>
        <fullName evidence="1">Threonine--tRNA ligase</fullName>
        <ecNumber evidence="1">6.1.1.3</ecNumber>
    </recommendedName>
    <alternativeName>
        <fullName evidence="1">Threonyl-tRNA synthetase</fullName>
        <shortName evidence="1">ThrRS</shortName>
    </alternativeName>
</protein>
<sequence>MPVITLPDGSQRHYDHAVSVLDVALDIGPGLAKACIAGRVNGELVDASDLIESDAQLAIITAKDAEGLEILRHSCAHLLGHAIKQLWPDTKMAIGPVIDNGFYYDVDIEHTLTQEDLALLEKRMHELADKDYDVIKKKVSWQEARDTFAARGEDYKVAILDENISRDDRPGLYHHEEYVDMCRGPHVPNMRFCHHFKLQKTSGAYWRGDSKNKMLQRIYGTAWGDKKQLNAYLQRLEEAAKRDHRKIGKQLDLYHMQEEAPGMVFWHNDGWTIFRELETFVRMKLKEYQYQEVKGPFMMDRVLWEKTGHWENYAEHMFTTSSENREYCIKPMNCPGHVQIFNQGLKSYRDLPLRMAEFGSCHRNEPSGALHGLMRVRGFTQDDAHVFCTEEQVRDEVNSCIKMVYDMYSTFGFEKIVVKLSTRPEKRIGSDELWTRAEDDLAAALTENGIPFDYQPGEGAFYGPKIEFTLHDCLDRAWQCGTVQLDFSLPGRLSASYIGENNDRQVPVMIHRAILGSMERFIGILTEEYAGFFPTWLAPVQVVVMNITDSQSDYVQQVTKKLQDAGIRAKADLRNEKIGFKIREHTLRRVPYMLVCGDKEVESGKIAVRTRRGKDLGSLDVNVVVDQLLAEIRSRSLHQLEE</sequence>
<proteinExistence type="inferred from homology"/>
<reference key="1">
    <citation type="submission" date="2008-04" db="EMBL/GenBank/DDBJ databases">
        <title>Complete sequence of Yersinia pseudotuberculosis PB1/+.</title>
        <authorList>
            <person name="Copeland A."/>
            <person name="Lucas S."/>
            <person name="Lapidus A."/>
            <person name="Glavina del Rio T."/>
            <person name="Dalin E."/>
            <person name="Tice H."/>
            <person name="Bruce D."/>
            <person name="Goodwin L."/>
            <person name="Pitluck S."/>
            <person name="Munk A.C."/>
            <person name="Brettin T."/>
            <person name="Detter J.C."/>
            <person name="Han C."/>
            <person name="Tapia R."/>
            <person name="Schmutz J."/>
            <person name="Larimer F."/>
            <person name="Land M."/>
            <person name="Hauser L."/>
            <person name="Challacombe J.F."/>
            <person name="Green L."/>
            <person name="Lindler L.E."/>
            <person name="Nikolich M.P."/>
            <person name="Richardson P."/>
        </authorList>
    </citation>
    <scope>NUCLEOTIDE SEQUENCE [LARGE SCALE GENOMIC DNA]</scope>
    <source>
        <strain>PB1/+</strain>
    </source>
</reference>
<keyword id="KW-0030">Aminoacyl-tRNA synthetase</keyword>
<keyword id="KW-0067">ATP-binding</keyword>
<keyword id="KW-0963">Cytoplasm</keyword>
<keyword id="KW-0436">Ligase</keyword>
<keyword id="KW-0479">Metal-binding</keyword>
<keyword id="KW-0547">Nucleotide-binding</keyword>
<keyword id="KW-0648">Protein biosynthesis</keyword>
<keyword id="KW-0694">RNA-binding</keyword>
<keyword id="KW-0820">tRNA-binding</keyword>
<keyword id="KW-0862">Zinc</keyword>